<dbReference type="EMBL" id="AF015309">
    <property type="protein sequence ID" value="AAC53590.1"/>
    <property type="molecule type" value="mRNA"/>
</dbReference>
<dbReference type="EMBL" id="AK088116">
    <property type="protein sequence ID" value="BAC40155.1"/>
    <property type="molecule type" value="mRNA"/>
</dbReference>
<dbReference type="EMBL" id="BC003746">
    <property type="protein sequence ID" value="AAH03746.1"/>
    <property type="molecule type" value="mRNA"/>
</dbReference>
<dbReference type="EMBL" id="BC085099">
    <property type="protein sequence ID" value="AAH85099.1"/>
    <property type="molecule type" value="mRNA"/>
</dbReference>
<dbReference type="EMBL" id="BC108340">
    <property type="protein sequence ID" value="AAI08341.1"/>
    <property type="molecule type" value="mRNA"/>
</dbReference>
<dbReference type="CCDS" id="CCDS37199.1"/>
<dbReference type="RefSeq" id="NP_001157628.1">
    <property type="nucleotide sequence ID" value="NM_001164156.1"/>
</dbReference>
<dbReference type="RefSeq" id="NP_001398840.1">
    <property type="nucleotide sequence ID" value="NM_001411911.1"/>
</dbReference>
<dbReference type="RefSeq" id="NP_058046.2">
    <property type="nucleotide sequence ID" value="NM_016766.3"/>
</dbReference>
<dbReference type="SMR" id="Q99L90"/>
<dbReference type="BioGRID" id="206187">
    <property type="interactions" value="1"/>
</dbReference>
<dbReference type="ComplexPortal" id="CPX-875">
    <property type="entry name" value="NSL histone acetyltransferase complex"/>
</dbReference>
<dbReference type="ComplexPortal" id="CPX-878">
    <property type="entry name" value="INO80 chromatin remodeling complex"/>
</dbReference>
<dbReference type="FunCoup" id="Q99L90">
    <property type="interactions" value="2591"/>
</dbReference>
<dbReference type="STRING" id="10090.ENSMUSP00000043901"/>
<dbReference type="GlyGen" id="Q99L90">
    <property type="glycosylation" value="3 sites, 1 O-linked glycan (2 sites)"/>
</dbReference>
<dbReference type="iPTMnet" id="Q99L90"/>
<dbReference type="PhosphoSitePlus" id="Q99L90"/>
<dbReference type="jPOST" id="Q99L90"/>
<dbReference type="PaxDb" id="10090-ENSMUSP00000043901"/>
<dbReference type="ProteomicsDB" id="295716"/>
<dbReference type="Pumba" id="Q99L90"/>
<dbReference type="Antibodypedia" id="25985">
    <property type="antibodies" value="155 antibodies from 24 providers"/>
</dbReference>
<dbReference type="DNASU" id="51812"/>
<dbReference type="Ensembl" id="ENSMUST00000041190.17">
    <property type="protein sequence ID" value="ENSMUSP00000043901.10"/>
    <property type="gene ID" value="ENSMUSG00000037570.17"/>
</dbReference>
<dbReference type="GeneID" id="51812"/>
<dbReference type="KEGG" id="mmu:51812"/>
<dbReference type="UCSC" id="uc007xpa.2">
    <property type="organism name" value="mouse"/>
</dbReference>
<dbReference type="AGR" id="MGI:1858420"/>
<dbReference type="CTD" id="10445"/>
<dbReference type="MGI" id="MGI:1858420">
    <property type="gene designation" value="Mcrs1"/>
</dbReference>
<dbReference type="VEuPathDB" id="HostDB:ENSMUSG00000037570"/>
<dbReference type="eggNOG" id="KOG2293">
    <property type="taxonomic scope" value="Eukaryota"/>
</dbReference>
<dbReference type="GeneTree" id="ENSGT00390000005536"/>
<dbReference type="InParanoid" id="Q99L90"/>
<dbReference type="OMA" id="HNTDGFL"/>
<dbReference type="OrthoDB" id="10262769at2759"/>
<dbReference type="PhylomeDB" id="Q99L90"/>
<dbReference type="TreeFam" id="TF318119"/>
<dbReference type="Reactome" id="R-MMU-3214847">
    <property type="pathway name" value="HATs acetylate histones"/>
</dbReference>
<dbReference type="Reactome" id="R-MMU-5689603">
    <property type="pathway name" value="UCH proteinases"/>
</dbReference>
<dbReference type="Reactome" id="R-MMU-5696394">
    <property type="pathway name" value="DNA Damage Recognition in GG-NER"/>
</dbReference>
<dbReference type="Reactome" id="R-MMU-9772755">
    <property type="pathway name" value="Formation of WDR5-containing histone-modifying complexes"/>
</dbReference>
<dbReference type="BioGRID-ORCS" id="51812">
    <property type="hits" value="29 hits in 117 CRISPR screens"/>
</dbReference>
<dbReference type="ChiTaRS" id="Mcrs1">
    <property type="organism name" value="mouse"/>
</dbReference>
<dbReference type="PRO" id="PR:Q99L90"/>
<dbReference type="Proteomes" id="UP000000589">
    <property type="component" value="Chromosome 15"/>
</dbReference>
<dbReference type="RNAct" id="Q99L90">
    <property type="molecule type" value="protein"/>
</dbReference>
<dbReference type="Bgee" id="ENSMUSG00000037570">
    <property type="expression patterns" value="Expressed in midbrain and 74 other cell types or tissues"/>
</dbReference>
<dbReference type="ExpressionAtlas" id="Q99L90">
    <property type="expression patterns" value="baseline and differential"/>
</dbReference>
<dbReference type="GO" id="GO:0005737">
    <property type="term" value="C:cytoplasm"/>
    <property type="evidence" value="ECO:0000250"/>
    <property type="project" value="UniProtKB"/>
</dbReference>
<dbReference type="GO" id="GO:0030425">
    <property type="term" value="C:dendrite"/>
    <property type="evidence" value="ECO:0000250"/>
    <property type="project" value="UniProtKB"/>
</dbReference>
<dbReference type="GO" id="GO:0000123">
    <property type="term" value="C:histone acetyltransferase complex"/>
    <property type="evidence" value="ECO:0000250"/>
    <property type="project" value="UniProtKB"/>
</dbReference>
<dbReference type="GO" id="GO:0031011">
    <property type="term" value="C:Ino80 complex"/>
    <property type="evidence" value="ECO:0000266"/>
    <property type="project" value="ComplexPortal"/>
</dbReference>
<dbReference type="GO" id="GO:0071339">
    <property type="term" value="C:MLL1 complex"/>
    <property type="evidence" value="ECO:0000250"/>
    <property type="project" value="UniProtKB"/>
</dbReference>
<dbReference type="GO" id="GO:0044545">
    <property type="term" value="C:NSL complex"/>
    <property type="evidence" value="ECO:0000266"/>
    <property type="project" value="ComplexPortal"/>
</dbReference>
<dbReference type="GO" id="GO:0016604">
    <property type="term" value="C:nuclear body"/>
    <property type="evidence" value="ECO:0007669"/>
    <property type="project" value="Ensembl"/>
</dbReference>
<dbReference type="GO" id="GO:0005730">
    <property type="term" value="C:nucleolus"/>
    <property type="evidence" value="ECO:0000250"/>
    <property type="project" value="UniProtKB"/>
</dbReference>
<dbReference type="GO" id="GO:0005634">
    <property type="term" value="C:nucleus"/>
    <property type="evidence" value="ECO:0000250"/>
    <property type="project" value="UniProtKB"/>
</dbReference>
<dbReference type="GO" id="GO:0043204">
    <property type="term" value="C:perikaryon"/>
    <property type="evidence" value="ECO:0000250"/>
    <property type="project" value="UniProtKB"/>
</dbReference>
<dbReference type="GO" id="GO:0002151">
    <property type="term" value="F:G-quadruplex RNA binding"/>
    <property type="evidence" value="ECO:0000250"/>
    <property type="project" value="UniProtKB"/>
</dbReference>
<dbReference type="GO" id="GO:0034046">
    <property type="term" value="F:poly(G) binding"/>
    <property type="evidence" value="ECO:0000250"/>
    <property type="project" value="UniProtKB"/>
</dbReference>
<dbReference type="GO" id="GO:0008266">
    <property type="term" value="F:poly(U) RNA binding"/>
    <property type="evidence" value="ECO:0000250"/>
    <property type="project" value="UniProtKB"/>
</dbReference>
<dbReference type="GO" id="GO:0006338">
    <property type="term" value="P:chromatin remodeling"/>
    <property type="evidence" value="ECO:0000266"/>
    <property type="project" value="ComplexPortal"/>
</dbReference>
<dbReference type="GO" id="GO:0006310">
    <property type="term" value="P:DNA recombination"/>
    <property type="evidence" value="ECO:0007669"/>
    <property type="project" value="UniProtKB-KW"/>
</dbReference>
<dbReference type="GO" id="GO:0006281">
    <property type="term" value="P:DNA repair"/>
    <property type="evidence" value="ECO:0007669"/>
    <property type="project" value="UniProtKB-KW"/>
</dbReference>
<dbReference type="GO" id="GO:0045739">
    <property type="term" value="P:positive regulation of DNA repair"/>
    <property type="evidence" value="ECO:0000314"/>
    <property type="project" value="ComplexPortal"/>
</dbReference>
<dbReference type="GO" id="GO:0045893">
    <property type="term" value="P:positive regulation of DNA-templated transcription"/>
    <property type="evidence" value="ECO:0000266"/>
    <property type="project" value="ComplexPortal"/>
</dbReference>
<dbReference type="GO" id="GO:1904751">
    <property type="term" value="P:positive regulation of protein localization to nucleolus"/>
    <property type="evidence" value="ECO:0000250"/>
    <property type="project" value="UniProtKB"/>
</dbReference>
<dbReference type="GO" id="GO:1904507">
    <property type="term" value="P:positive regulation of telomere maintenance in response to DNA damage"/>
    <property type="evidence" value="ECO:0000315"/>
    <property type="project" value="ComplexPortal"/>
</dbReference>
<dbReference type="GO" id="GO:0051726">
    <property type="term" value="P:regulation of cell cycle"/>
    <property type="evidence" value="ECO:0000266"/>
    <property type="project" value="ComplexPortal"/>
</dbReference>
<dbReference type="GO" id="GO:0033044">
    <property type="term" value="P:regulation of chromosome organization"/>
    <property type="evidence" value="ECO:0000266"/>
    <property type="project" value="ComplexPortal"/>
</dbReference>
<dbReference type="GO" id="GO:0006282">
    <property type="term" value="P:regulation of DNA repair"/>
    <property type="evidence" value="ECO:0000314"/>
    <property type="project" value="ComplexPortal"/>
</dbReference>
<dbReference type="GO" id="GO:0006275">
    <property type="term" value="P:regulation of DNA replication"/>
    <property type="evidence" value="ECO:0000266"/>
    <property type="project" value="ComplexPortal"/>
</dbReference>
<dbReference type="GO" id="GO:0060382">
    <property type="term" value="P:regulation of DNA strand elongation"/>
    <property type="evidence" value="ECO:0000266"/>
    <property type="project" value="ComplexPortal"/>
</dbReference>
<dbReference type="GO" id="GO:0045995">
    <property type="term" value="P:regulation of embryonic development"/>
    <property type="evidence" value="ECO:0000315"/>
    <property type="project" value="ComplexPortal"/>
</dbReference>
<dbReference type="GO" id="GO:0000723">
    <property type="term" value="P:telomere maintenance"/>
    <property type="evidence" value="ECO:0000315"/>
    <property type="project" value="ComplexPortal"/>
</dbReference>
<dbReference type="CDD" id="cd22687">
    <property type="entry name" value="FHA_MCRS1"/>
    <property type="match status" value="1"/>
</dbReference>
<dbReference type="FunFam" id="2.60.200.20:FF:000007">
    <property type="entry name" value="microspherule protein 1 isoform X1"/>
    <property type="match status" value="1"/>
</dbReference>
<dbReference type="Gene3D" id="2.60.200.20">
    <property type="match status" value="1"/>
</dbReference>
<dbReference type="InterPro" id="IPR000253">
    <property type="entry name" value="FHA_dom"/>
</dbReference>
<dbReference type="InterPro" id="IPR037912">
    <property type="entry name" value="MCRS1"/>
</dbReference>
<dbReference type="InterPro" id="IPR025999">
    <property type="entry name" value="MCRS_N"/>
</dbReference>
<dbReference type="InterPro" id="IPR008984">
    <property type="entry name" value="SMAD_FHA_dom_sf"/>
</dbReference>
<dbReference type="PANTHER" id="PTHR13233">
    <property type="entry name" value="MICROSPHERULE PROTEIN 1"/>
    <property type="match status" value="1"/>
</dbReference>
<dbReference type="PANTHER" id="PTHR13233:SF0">
    <property type="entry name" value="MICROSPHERULE PROTEIN 1"/>
    <property type="match status" value="1"/>
</dbReference>
<dbReference type="Pfam" id="PF00498">
    <property type="entry name" value="FHA"/>
    <property type="match status" value="1"/>
</dbReference>
<dbReference type="Pfam" id="PF13325">
    <property type="entry name" value="MCRS_N"/>
    <property type="match status" value="1"/>
</dbReference>
<dbReference type="SMART" id="SM00240">
    <property type="entry name" value="FHA"/>
    <property type="match status" value="1"/>
</dbReference>
<dbReference type="SUPFAM" id="SSF49879">
    <property type="entry name" value="SMAD/FHA domain"/>
    <property type="match status" value="1"/>
</dbReference>
<dbReference type="PROSITE" id="PS50006">
    <property type="entry name" value="FHA_DOMAIN"/>
    <property type="match status" value="1"/>
</dbReference>
<proteinExistence type="evidence at protein level"/>
<keyword id="KW-0007">Acetylation</keyword>
<keyword id="KW-0137">Centromere</keyword>
<keyword id="KW-0156">Chromatin regulator</keyword>
<keyword id="KW-0158">Chromosome</keyword>
<keyword id="KW-0175">Coiled coil</keyword>
<keyword id="KW-0963">Cytoplasm</keyword>
<keyword id="KW-0206">Cytoskeleton</keyword>
<keyword id="KW-0227">DNA damage</keyword>
<keyword id="KW-0233">DNA recombination</keyword>
<keyword id="KW-0234">DNA repair</keyword>
<keyword id="KW-0995">Kinetochore</keyword>
<keyword id="KW-0458">Lysosome</keyword>
<keyword id="KW-0539">Nucleus</keyword>
<keyword id="KW-0597">Phosphoprotein</keyword>
<keyword id="KW-1185">Reference proteome</keyword>
<keyword id="KW-0804">Transcription</keyword>
<keyword id="KW-0805">Transcription regulation</keyword>
<keyword id="KW-0832">Ubl conjugation</keyword>
<gene>
    <name type="primary">Mcrs1</name>
    <name type="synonym">Msp58</name>
</gene>
<protein>
    <recommendedName>
        <fullName>Microspherule protein 1</fullName>
    </recommendedName>
    <alternativeName>
        <fullName>58 kDa microspherule protein</fullName>
    </alternativeName>
</protein>
<feature type="chain" id="PRO_0000096306" description="Microspherule protein 1">
    <location>
        <begin position="1"/>
        <end position="462"/>
    </location>
</feature>
<feature type="domain" description="FHA" evidence="3">
    <location>
        <begin position="363"/>
        <end position="419"/>
    </location>
</feature>
<feature type="region of interest" description="Disordered" evidence="4">
    <location>
        <begin position="1"/>
        <end position="130"/>
    </location>
</feature>
<feature type="coiled-coil region" evidence="2">
    <location>
        <begin position="301"/>
        <end position="335"/>
    </location>
</feature>
<feature type="short sequence motif" description="Nuclear localization signal" evidence="2">
    <location>
        <begin position="113"/>
        <end position="123"/>
    </location>
</feature>
<feature type="short sequence motif" description="UBR5-degron" evidence="1">
    <location>
        <begin position="389"/>
        <end position="396"/>
    </location>
</feature>
<feature type="compositionally biased region" description="Basic residues" evidence="4">
    <location>
        <begin position="43"/>
        <end position="55"/>
    </location>
</feature>
<feature type="compositionally biased region" description="Low complexity" evidence="4">
    <location>
        <begin position="81"/>
        <end position="90"/>
    </location>
</feature>
<feature type="compositionally biased region" description="Pro residues" evidence="4">
    <location>
        <begin position="103"/>
        <end position="112"/>
    </location>
</feature>
<feature type="modified residue" description="N-acetylmethionine" evidence="1">
    <location>
        <position position="1"/>
    </location>
</feature>
<feature type="modified residue" description="Phosphoserine" evidence="1">
    <location>
        <position position="22"/>
    </location>
</feature>
<feature type="modified residue" description="Phosphoserine" evidence="10">
    <location>
        <position position="102"/>
    </location>
</feature>
<feature type="modified residue" description="Phosphothreonine" evidence="10">
    <location>
        <position position="103"/>
    </location>
</feature>
<feature type="modified residue" description="Phosphoserine" evidence="10">
    <location>
        <position position="108"/>
    </location>
</feature>
<feature type="modified residue" description="N6-acetyllysine" evidence="11">
    <location>
        <position position="123"/>
    </location>
</feature>
<feature type="modified residue" description="N6-acetyllysine" evidence="11">
    <location>
        <position position="130"/>
    </location>
</feature>
<feature type="modified residue" description="Phosphoserine" evidence="8 9 10">
    <location>
        <position position="282"/>
    </location>
</feature>
<feature type="sequence conflict" description="In Ref. 1; AAC53590." evidence="7" ref="1">
    <original>R</original>
    <variation>K</variation>
    <location>
        <position position="193"/>
    </location>
</feature>
<feature type="sequence conflict" description="In Ref. 1; AAC53590." evidence="7" ref="1">
    <original>K</original>
    <variation>R</variation>
    <location>
        <position position="274"/>
    </location>
</feature>
<feature type="sequence conflict" description="In Ref. 1; AAC53590." evidence="7" ref="1">
    <original>D</original>
    <variation>N</variation>
    <location>
        <position position="298"/>
    </location>
</feature>
<feature type="sequence conflict" description="In Ref. 1; AAC53590." evidence="7" ref="1">
    <original>RE</original>
    <variation>QK</variation>
    <location>
        <begin position="314"/>
        <end position="315"/>
    </location>
</feature>
<feature type="sequence conflict" description="In Ref. 1; AAC53590." evidence="7" ref="1">
    <original>A</original>
    <variation>T</variation>
    <location>
        <position position="368"/>
    </location>
</feature>
<reference key="1">
    <citation type="journal article" date="1998" name="Eur. J. Biochem.">
        <title>The 58-kDa microspherule protein (MSP58), a nucleolar protein, interacts with nucleolar protein p120.</title>
        <authorList>
            <person name="Ren Y."/>
            <person name="Busch R.K."/>
            <person name="Perlaky L."/>
            <person name="Busch H."/>
        </authorList>
    </citation>
    <scope>NUCLEOTIDE SEQUENCE [MRNA]</scope>
</reference>
<reference key="2">
    <citation type="journal article" date="2005" name="Science">
        <title>The transcriptional landscape of the mammalian genome.</title>
        <authorList>
            <person name="Carninci P."/>
            <person name="Kasukawa T."/>
            <person name="Katayama S."/>
            <person name="Gough J."/>
            <person name="Frith M.C."/>
            <person name="Maeda N."/>
            <person name="Oyama R."/>
            <person name="Ravasi T."/>
            <person name="Lenhard B."/>
            <person name="Wells C."/>
            <person name="Kodzius R."/>
            <person name="Shimokawa K."/>
            <person name="Bajic V.B."/>
            <person name="Brenner S.E."/>
            <person name="Batalov S."/>
            <person name="Forrest A.R."/>
            <person name="Zavolan M."/>
            <person name="Davis M.J."/>
            <person name="Wilming L.G."/>
            <person name="Aidinis V."/>
            <person name="Allen J.E."/>
            <person name="Ambesi-Impiombato A."/>
            <person name="Apweiler R."/>
            <person name="Aturaliya R.N."/>
            <person name="Bailey T.L."/>
            <person name="Bansal M."/>
            <person name="Baxter L."/>
            <person name="Beisel K.W."/>
            <person name="Bersano T."/>
            <person name="Bono H."/>
            <person name="Chalk A.M."/>
            <person name="Chiu K.P."/>
            <person name="Choudhary V."/>
            <person name="Christoffels A."/>
            <person name="Clutterbuck D.R."/>
            <person name="Crowe M.L."/>
            <person name="Dalla E."/>
            <person name="Dalrymple B.P."/>
            <person name="de Bono B."/>
            <person name="Della Gatta G."/>
            <person name="di Bernardo D."/>
            <person name="Down T."/>
            <person name="Engstrom P."/>
            <person name="Fagiolini M."/>
            <person name="Faulkner G."/>
            <person name="Fletcher C.F."/>
            <person name="Fukushima T."/>
            <person name="Furuno M."/>
            <person name="Futaki S."/>
            <person name="Gariboldi M."/>
            <person name="Georgii-Hemming P."/>
            <person name="Gingeras T.R."/>
            <person name="Gojobori T."/>
            <person name="Green R.E."/>
            <person name="Gustincich S."/>
            <person name="Harbers M."/>
            <person name="Hayashi Y."/>
            <person name="Hensch T.K."/>
            <person name="Hirokawa N."/>
            <person name="Hill D."/>
            <person name="Huminiecki L."/>
            <person name="Iacono M."/>
            <person name="Ikeo K."/>
            <person name="Iwama A."/>
            <person name="Ishikawa T."/>
            <person name="Jakt M."/>
            <person name="Kanapin A."/>
            <person name="Katoh M."/>
            <person name="Kawasawa Y."/>
            <person name="Kelso J."/>
            <person name="Kitamura H."/>
            <person name="Kitano H."/>
            <person name="Kollias G."/>
            <person name="Krishnan S.P."/>
            <person name="Kruger A."/>
            <person name="Kummerfeld S.K."/>
            <person name="Kurochkin I.V."/>
            <person name="Lareau L.F."/>
            <person name="Lazarevic D."/>
            <person name="Lipovich L."/>
            <person name="Liu J."/>
            <person name="Liuni S."/>
            <person name="McWilliam S."/>
            <person name="Madan Babu M."/>
            <person name="Madera M."/>
            <person name="Marchionni L."/>
            <person name="Matsuda H."/>
            <person name="Matsuzawa S."/>
            <person name="Miki H."/>
            <person name="Mignone F."/>
            <person name="Miyake S."/>
            <person name="Morris K."/>
            <person name="Mottagui-Tabar S."/>
            <person name="Mulder N."/>
            <person name="Nakano N."/>
            <person name="Nakauchi H."/>
            <person name="Ng P."/>
            <person name="Nilsson R."/>
            <person name="Nishiguchi S."/>
            <person name="Nishikawa S."/>
            <person name="Nori F."/>
            <person name="Ohara O."/>
            <person name="Okazaki Y."/>
            <person name="Orlando V."/>
            <person name="Pang K.C."/>
            <person name="Pavan W.J."/>
            <person name="Pavesi G."/>
            <person name="Pesole G."/>
            <person name="Petrovsky N."/>
            <person name="Piazza S."/>
            <person name="Reed J."/>
            <person name="Reid J.F."/>
            <person name="Ring B.Z."/>
            <person name="Ringwald M."/>
            <person name="Rost B."/>
            <person name="Ruan Y."/>
            <person name="Salzberg S.L."/>
            <person name="Sandelin A."/>
            <person name="Schneider C."/>
            <person name="Schoenbach C."/>
            <person name="Sekiguchi K."/>
            <person name="Semple C.A."/>
            <person name="Seno S."/>
            <person name="Sessa L."/>
            <person name="Sheng Y."/>
            <person name="Shibata Y."/>
            <person name="Shimada H."/>
            <person name="Shimada K."/>
            <person name="Silva D."/>
            <person name="Sinclair B."/>
            <person name="Sperling S."/>
            <person name="Stupka E."/>
            <person name="Sugiura K."/>
            <person name="Sultana R."/>
            <person name="Takenaka Y."/>
            <person name="Taki K."/>
            <person name="Tammoja K."/>
            <person name="Tan S.L."/>
            <person name="Tang S."/>
            <person name="Taylor M.S."/>
            <person name="Tegner J."/>
            <person name="Teichmann S.A."/>
            <person name="Ueda H.R."/>
            <person name="van Nimwegen E."/>
            <person name="Verardo R."/>
            <person name="Wei C.L."/>
            <person name="Yagi K."/>
            <person name="Yamanishi H."/>
            <person name="Zabarovsky E."/>
            <person name="Zhu S."/>
            <person name="Zimmer A."/>
            <person name="Hide W."/>
            <person name="Bult C."/>
            <person name="Grimmond S.M."/>
            <person name="Teasdale R.D."/>
            <person name="Liu E.T."/>
            <person name="Brusic V."/>
            <person name="Quackenbush J."/>
            <person name="Wahlestedt C."/>
            <person name="Mattick J.S."/>
            <person name="Hume D.A."/>
            <person name="Kai C."/>
            <person name="Sasaki D."/>
            <person name="Tomaru Y."/>
            <person name="Fukuda S."/>
            <person name="Kanamori-Katayama M."/>
            <person name="Suzuki M."/>
            <person name="Aoki J."/>
            <person name="Arakawa T."/>
            <person name="Iida J."/>
            <person name="Imamura K."/>
            <person name="Itoh M."/>
            <person name="Kato T."/>
            <person name="Kawaji H."/>
            <person name="Kawagashira N."/>
            <person name="Kawashima T."/>
            <person name="Kojima M."/>
            <person name="Kondo S."/>
            <person name="Konno H."/>
            <person name="Nakano K."/>
            <person name="Ninomiya N."/>
            <person name="Nishio T."/>
            <person name="Okada M."/>
            <person name="Plessy C."/>
            <person name="Shibata K."/>
            <person name="Shiraki T."/>
            <person name="Suzuki S."/>
            <person name="Tagami M."/>
            <person name="Waki K."/>
            <person name="Watahiki A."/>
            <person name="Okamura-Oho Y."/>
            <person name="Suzuki H."/>
            <person name="Kawai J."/>
            <person name="Hayashizaki Y."/>
        </authorList>
    </citation>
    <scope>NUCLEOTIDE SEQUENCE [LARGE SCALE MRNA]</scope>
    <source>
        <strain>NOD</strain>
        <tissue>Thymus</tissue>
    </source>
</reference>
<reference key="3">
    <citation type="journal article" date="2004" name="Genome Res.">
        <title>The status, quality, and expansion of the NIH full-length cDNA project: the Mammalian Gene Collection (MGC).</title>
        <authorList>
            <consortium name="The MGC Project Team"/>
        </authorList>
    </citation>
    <scope>NUCLEOTIDE SEQUENCE [LARGE SCALE MRNA]</scope>
    <source>
        <tissue>Eye</tissue>
        <tissue>Mammary tumor</tissue>
        <tissue>Olfactory epithelium</tissue>
    </source>
</reference>
<reference key="4">
    <citation type="journal article" date="2004" name="Mol. Cell. Proteomics">
        <title>Phosphoproteomic analysis of the developing mouse brain.</title>
        <authorList>
            <person name="Ballif B.A."/>
            <person name="Villen J."/>
            <person name="Beausoleil S.A."/>
            <person name="Schwartz D."/>
            <person name="Gygi S.P."/>
        </authorList>
    </citation>
    <scope>PHOSPHORYLATION [LARGE SCALE ANALYSIS] AT SER-282</scope>
    <scope>IDENTIFICATION BY MASS SPECTROMETRY [LARGE SCALE ANALYSIS]</scope>
    <source>
        <tissue>Embryonic brain</tissue>
    </source>
</reference>
<reference key="5">
    <citation type="journal article" date="2009" name="Immunity">
        <title>The phagosomal proteome in interferon-gamma-activated macrophages.</title>
        <authorList>
            <person name="Trost M."/>
            <person name="English L."/>
            <person name="Lemieux S."/>
            <person name="Courcelles M."/>
            <person name="Desjardins M."/>
            <person name="Thibault P."/>
        </authorList>
    </citation>
    <scope>PHOSPHORYLATION [LARGE SCALE ANALYSIS] AT SER-282</scope>
    <scope>IDENTIFICATION BY MASS SPECTROMETRY [LARGE SCALE ANALYSIS]</scope>
</reference>
<reference key="6">
    <citation type="journal article" date="2010" name="Cell">
        <title>A tissue-specific atlas of mouse protein phosphorylation and expression.</title>
        <authorList>
            <person name="Huttlin E.L."/>
            <person name="Jedrychowski M.P."/>
            <person name="Elias J.E."/>
            <person name="Goswami T."/>
            <person name="Rad R."/>
            <person name="Beausoleil S.A."/>
            <person name="Villen J."/>
            <person name="Haas W."/>
            <person name="Sowa M.E."/>
            <person name="Gygi S.P."/>
        </authorList>
    </citation>
    <scope>PHOSPHORYLATION [LARGE SCALE ANALYSIS] AT SER-102; THR-103; SER-108 AND SER-282</scope>
    <scope>IDENTIFICATION BY MASS SPECTROMETRY [LARGE SCALE ANALYSIS]</scope>
    <source>
        <tissue>Brain</tissue>
        <tissue>Heart</tissue>
        <tissue>Kidney</tissue>
        <tissue>Lung</tissue>
        <tissue>Spleen</tissue>
        <tissue>Testis</tissue>
    </source>
</reference>
<reference key="7">
    <citation type="journal article" date="2013" name="Mol. Cell">
        <title>SIRT5-mediated lysine desuccinylation impacts diverse metabolic pathways.</title>
        <authorList>
            <person name="Park J."/>
            <person name="Chen Y."/>
            <person name="Tishkoff D.X."/>
            <person name="Peng C."/>
            <person name="Tan M."/>
            <person name="Dai L."/>
            <person name="Xie Z."/>
            <person name="Zhang Y."/>
            <person name="Zwaans B.M."/>
            <person name="Skinner M.E."/>
            <person name="Lombard D.B."/>
            <person name="Zhao Y."/>
        </authorList>
    </citation>
    <scope>ACETYLATION [LARGE SCALE ANALYSIS] AT LYS-123 AND LYS-130</scope>
    <scope>IDENTIFICATION BY MASS SPECTROMETRY [LARGE SCALE ANALYSIS]</scope>
    <source>
        <tissue>Embryonic fibroblast</tissue>
    </source>
</reference>
<reference key="8">
    <citation type="journal article" date="2020" name="Reproduction">
        <title>MCRS1 is essential for epiblast development during early mouse embryogenesis.</title>
        <authorList>
            <person name="Cui W."/>
            <person name="Cheong A."/>
            <person name="Wang Y."/>
            <person name="Tsuchida Y."/>
            <person name="Liu Y."/>
            <person name="Tremblay K.D."/>
            <person name="Mager J."/>
        </authorList>
    </citation>
    <scope>FUNCTION</scope>
    <scope>SUBCELLULAR LOCATION</scope>
    <scope>DISRUPTION PHENOTYPE</scope>
</reference>
<reference key="9">
    <citation type="journal article" date="2023" name="EMBO Rep.">
        <title>Mcrs1 regulates G2/M transition and spindle assembly during mouse oocyte meiosis.</title>
        <authorList>
            <person name="Ju J.Q."/>
            <person name="Pan Z.N."/>
            <person name="Zhang K.H."/>
            <person name="Ji Y.M."/>
            <person name="Liu J.C."/>
            <person name="Sun S.C."/>
        </authorList>
    </citation>
    <scope>FUNCTION</scope>
    <scope>SUBCELLULAR LOCATION</scope>
    <scope>DEVELOPMENTAL STAGE</scope>
</reference>
<name>MCRS1_MOUSE</name>
<accession>Q99L90</accession>
<accession>O35255</accession>
<accession>Q32P11</accession>
<organism>
    <name type="scientific">Mus musculus</name>
    <name type="common">Mouse</name>
    <dbReference type="NCBI Taxonomy" id="10090"/>
    <lineage>
        <taxon>Eukaryota</taxon>
        <taxon>Metazoa</taxon>
        <taxon>Chordata</taxon>
        <taxon>Craniata</taxon>
        <taxon>Vertebrata</taxon>
        <taxon>Euteleostomi</taxon>
        <taxon>Mammalia</taxon>
        <taxon>Eutheria</taxon>
        <taxon>Euarchontoglires</taxon>
        <taxon>Glires</taxon>
        <taxon>Rodentia</taxon>
        <taxon>Myomorpha</taxon>
        <taxon>Muroidea</taxon>
        <taxon>Muridae</taxon>
        <taxon>Murinae</taxon>
        <taxon>Mus</taxon>
        <taxon>Mus</taxon>
    </lineage>
</organism>
<comment type="function">
    <text evidence="1 5 6">Modulates the transcription repressor activity of DAXX by recruiting it to the nucleolus (By similarity). As part of the NSL complex it may be involved in acetylation of nucleosomal histone H4 on several lysine residues (By similarity). Putative regulatory component of the chromatin remodeling INO80 complex which is involved in transcriptional regulation, DNA replication and probably DNA repair (By similarity). May also be an inhibitor of TERT telomerase activity (By similarity). Binds to G-quadruplex structures in mRNA. Binds to RNA homomer poly(G) and poly(U) (By similarity). Maintains RHEB at the lysosome in its active GTP-bound form and prevents its interaction with the mTORC1 complex inhibitor TSC2, ensuring activation of the mTORC1 complex by RHEB (By similarity). Stabilizes the minus ends of kinetochore fibers by protecting them from depolymerization, ensuring functional spindle assembly during mitosis (By similarity). Following phosphorylation by TTK/MPS1, enhances recruitment of KIF2A to the minus ends of mitotic spindle microtubules which promotes chromosome alignment (By similarity). Regulates the morphology of microtubule minus ends in mitotic spindle by maintaining them in a closed conformation characterized by the presence of an electron-dense cap (By similarity). Regulates G2/M transition and spindle assembly during oocyte meiosis (PubMed:36951681). Mediates histone modifications and transcriptional regulation in germinal vesicle oocytes which are required for meiotic progression (PubMed:36951681). Also regulates microtubule nucleation and spindle assembly by activating aurora kinases during oocyte meiosis (PubMed:36951681). Contributes to the establishment of centriolar satellites and also plays a role in primary cilium formation by recruiting TTBK2 to the mother centriole which is necessary for removal of the CP110 cap from the mother centriole, an early step in ciliogenesis (By similarity). Required for epiblast development during early embryogenesis (PubMed:31671403). Essential for cell viability (By similarity).</text>
</comment>
<comment type="subunit">
    <text evidence="1">Component of the chromatin remodeling INO80 complex; specifically part of a complex module associated with the N-terminus of INO80. Component of some MLL1/MLL complex, at least composed of the core components KMT2A/MLL1, ASH2L, HCFC1, WDR5 and RBBP5, as well as the facultative components BACC1, CHD8, E2F6, HSP70, INO80C, KANSL1, LAS1L, MAX, MCRS1, MGA, KAT8/MOF, PELP1, PHF20, PRP31, RING2, RUVB1/TIP49A, RUVB2/TIP49B, SENP3, TAF1, TAF4, TAF6, TAF7, TAF9 and TEX10. Component of the NSL complex at least composed of MOF/KAT8, KANSL1, KANSL2, KANSL3, MCRS1, PHF20, OGT1/OGT, WDR5 and HCFC1. Interacts with NOP2. Interacts with PINX1. Interacts with TERT. Interacts with CCDC85B. Interacts with DAXX. Interacts (via N-terminus) with FMR1 (via phosphorylated form). Interacts with FXR1 and FXR2. Interacts (via C-terminus) with NDE1 (via C-terminus); phosphorylation of NDE1 inhibits the interaction. Interacts (via C-terminus) with ZNF375. Interacts (via C-terminus) with active GTP-bound RHEB (via N-terminus) under conditions of high amino acid concentration; the interaction promotes mTORC1 complex activation by RHEB. Interacts (via N-terminus) with the mTORC1 complex; the interaction ensures mTORC1 activation by RHEB. Interacts with DYNC1I1; the interaction is required for the proper distribution of centriolar satellites. Interacts with TTBK2; the interaction is required for recruitment of TTBK2 to the mother centriole. Interacts with KIF2A; the interaction occurs during mitosis and facilitates chromosome alignment.</text>
</comment>
<comment type="subcellular location">
    <subcellularLocation>
        <location evidence="5 6">Nucleus</location>
    </subcellularLocation>
    <subcellularLocation>
        <location evidence="1">Nucleus</location>
        <location evidence="1">Nucleolus</location>
    </subcellularLocation>
    <subcellularLocation>
        <location evidence="5">Cytoplasm</location>
    </subcellularLocation>
    <subcellularLocation>
        <location evidence="1">Cytoplasm</location>
        <location evidence="1">Cytoskeleton</location>
        <location evidence="1">Microtubule organizing center</location>
        <location evidence="1">Centrosome</location>
    </subcellularLocation>
    <subcellularLocation>
        <location evidence="6">Cytoplasm</location>
        <location evidence="6">Cytoskeleton</location>
        <location evidence="6">Spindle pole</location>
    </subcellularLocation>
    <subcellularLocation>
        <location evidence="1">Chromosome</location>
        <location evidence="1">Centromere</location>
        <location evidence="1">Kinetochore</location>
    </subcellularLocation>
    <subcellularLocation>
        <location evidence="6">Chromosome</location>
    </subcellularLocation>
    <subcellularLocation>
        <location evidence="1">Lysosome</location>
    </subcellularLocation>
    <subcellularLocation>
        <location evidence="1">Cytoplasm</location>
        <location evidence="1">Cytoskeleton</location>
        <location evidence="1">Microtubule organizing center</location>
        <location evidence="1">Centrosome</location>
        <location evidence="1">Centriolar satellite</location>
    </subcellularLocation>
    <text evidence="1 5 6">Predominantly concentrated in the nucleus but also localizes to the centrosome (By similarity). Detected on the spindle poles during mitosis from prometaphase to telophase (By similarity). Found in microspherules in the nucleolus (By similarity). Localizes to lysosomes under high amino acid concentration conditions (By similarity). Localizes to the minus ends of kinetochore fibers and chromosomal microtubules (By similarity). Present in the nucleus of germinal vesicle oocytes and associates with spindles poles and chromosomes after germinal vesicle breakdown (PubMed:36951681). Present in cytoplasm and nucleus from the oocyte through to the two-cell stage (PubMed:31671403). By the four-cell stage, appears more concentrated in the nucleus and, by the blastocyst stage, becomes notably concentrated in the nuclei of cells of the inner cell mass compared with the trophectoderm (PubMed:31671403).</text>
</comment>
<comment type="developmental stage">
    <text evidence="6">Expressed in oocytes throughout meiotic maturation (at protein level).</text>
</comment>
<comment type="domain">
    <text evidence="1">The N-terminal region is required for nuclear localization while the C-terminal region encompassing the FHA domain is required for centrosomal localization.</text>
</comment>
<comment type="PTM">
    <text evidence="1">Ubiquitinated by UBR5 when not assembled in the INO80 complex, leading to its degradation: UBR5 recognizes and binds a degron that is not accessible when MCRS1 is part of the INO80 complex.</text>
</comment>
<comment type="PTM">
    <text evidence="1">Phosphorylated by AURKA on Ser-35 and/or Ser-36 during mitosis which is required for kinetochore fiber assembly and mitotic progression but not for spindle localization or for chromosome-induced microtuble aster formation. Also phosphorylated by AURKA on Ser-85 and/or Ser-87. Phosphorylated by TTK/MPS1 which enhances recruitment of KIF2A to the minus end of spindle microtubules and facilitates precise chromosome segregation.</text>
</comment>
<comment type="disruption phenotype">
    <text evidence="5">Embryos exhibit normal morphology at the blastocyst stage but do not survive to the gastrulation stage (PubMed:31671403). Apoptosis and global H4 acetylation are normal and the trophoblast and primitive endoderm are properly specified but the epiblast lineage exhibits a severe reduction in cell number with mutants failing to form a typical inner cell mass colony (PubMed:31671403).</text>
</comment>
<sequence length="462" mass="51692">MDKDSQGLLDSSLMASGTASRSEDEESLAGQKRASSQALGTIPKRRSSSRFIKRKKFDDELVESSLAKSSTRVKGAGGVESGRCSGSEPSSSEKKKVSKAPSTPVPPSPAPTPGLTKRVKKSKQPLQVTKDLGRWKPADDLLLINAVLQTNDLTSVHLGVKFSCRFTLREVQERWYALLYDPVISKLACQAMRQLHPEAIAAIQSKALFSKAEEQLLSKVGSSSQPTLETFQDLLHTHPDAFYLARTAKALQAHWQLMKQYYLLEDQTVQPLPKGDQVLNFSDAEDLIDDSKLKDMRDEVLEHELTVADRRQKREIRQLEQELHKWQVLVDSITGMGSPDFDNQTLAVLRGRMVRYLMRSREITLGRATKDNQIDVDLSLEGPAWKISRKQGVIKLKNNGDFFIANEGRRPIYIDGRPVLCGSKWRLSNNSVVEIASLRFVFLINQDLIALIRAEAAKITPQ</sequence>
<evidence type="ECO:0000250" key="1">
    <source>
        <dbReference type="UniProtKB" id="Q96EZ8"/>
    </source>
</evidence>
<evidence type="ECO:0000255" key="2"/>
<evidence type="ECO:0000255" key="3">
    <source>
        <dbReference type="PROSITE-ProRule" id="PRU00086"/>
    </source>
</evidence>
<evidence type="ECO:0000256" key="4">
    <source>
        <dbReference type="SAM" id="MobiDB-lite"/>
    </source>
</evidence>
<evidence type="ECO:0000269" key="5">
    <source>
    </source>
</evidence>
<evidence type="ECO:0000269" key="6">
    <source>
    </source>
</evidence>
<evidence type="ECO:0000305" key="7"/>
<evidence type="ECO:0007744" key="8">
    <source>
    </source>
</evidence>
<evidence type="ECO:0007744" key="9">
    <source>
    </source>
</evidence>
<evidence type="ECO:0007744" key="10">
    <source>
    </source>
</evidence>
<evidence type="ECO:0007744" key="11">
    <source>
    </source>
</evidence>